<accession>Q0KEP7</accession>
<gene>
    <name evidence="1" type="primary">ispE</name>
    <name type="ordered locus">H16_A0374</name>
</gene>
<keyword id="KW-0067">ATP-binding</keyword>
<keyword id="KW-0414">Isoprene biosynthesis</keyword>
<keyword id="KW-0418">Kinase</keyword>
<keyword id="KW-0547">Nucleotide-binding</keyword>
<keyword id="KW-1185">Reference proteome</keyword>
<keyword id="KW-0808">Transferase</keyword>
<sequence>MHRSQPLPPPELRDCPAPAKLNLFLHVTGRRADGYHTLQTVFQLVDWCDTLHFRRRDDGVVARVTDVPGVPAETDLVVRAARALQAATGATFGADIAIDKVLPMGGGIGGGSSDAATTLLALNHLWGLGLARAELMRIGLALGADVPVFVLGQNAFAQGIGEDLTPVELPESWFVVIHPKQHVPTAEIFSDECLTRDTPLSIIAVFAARTNKFDFGRNDLEPIATAKFGEVARALAWLKQHNQHARMTGSGACVFARFPDAATAQQVLERLPPEWDGRCVRSLARHPLAALA</sequence>
<proteinExistence type="inferred from homology"/>
<reference key="1">
    <citation type="journal article" date="2006" name="Nat. Biotechnol.">
        <title>Genome sequence of the bioplastic-producing 'Knallgas' bacterium Ralstonia eutropha H16.</title>
        <authorList>
            <person name="Pohlmann A."/>
            <person name="Fricke W.F."/>
            <person name="Reinecke F."/>
            <person name="Kusian B."/>
            <person name="Liesegang H."/>
            <person name="Cramm R."/>
            <person name="Eitinger T."/>
            <person name="Ewering C."/>
            <person name="Poetter M."/>
            <person name="Schwartz E."/>
            <person name="Strittmatter A."/>
            <person name="Voss I."/>
            <person name="Gottschalk G."/>
            <person name="Steinbuechel A."/>
            <person name="Friedrich B."/>
            <person name="Bowien B."/>
        </authorList>
    </citation>
    <scope>NUCLEOTIDE SEQUENCE [LARGE SCALE GENOMIC DNA]</scope>
    <source>
        <strain>ATCC 17699 / DSM 428 / KCTC 22496 / NCIMB 10442 / H16 / Stanier 337</strain>
    </source>
</reference>
<name>ISPE_CUPNH</name>
<organism>
    <name type="scientific">Cupriavidus necator (strain ATCC 17699 / DSM 428 / KCTC 22496 / NCIMB 10442 / H16 / Stanier 337)</name>
    <name type="common">Ralstonia eutropha</name>
    <dbReference type="NCBI Taxonomy" id="381666"/>
    <lineage>
        <taxon>Bacteria</taxon>
        <taxon>Pseudomonadati</taxon>
        <taxon>Pseudomonadota</taxon>
        <taxon>Betaproteobacteria</taxon>
        <taxon>Burkholderiales</taxon>
        <taxon>Burkholderiaceae</taxon>
        <taxon>Cupriavidus</taxon>
    </lineage>
</organism>
<feature type="chain" id="PRO_0000335743" description="4-diphosphocytidyl-2-C-methyl-D-erythritol kinase">
    <location>
        <begin position="1"/>
        <end position="292"/>
    </location>
</feature>
<feature type="active site" evidence="1">
    <location>
        <position position="20"/>
    </location>
</feature>
<feature type="active site" evidence="1">
    <location>
        <position position="145"/>
    </location>
</feature>
<feature type="binding site" evidence="1">
    <location>
        <begin position="103"/>
        <end position="113"/>
    </location>
    <ligand>
        <name>ATP</name>
        <dbReference type="ChEBI" id="CHEBI:30616"/>
    </ligand>
</feature>
<comment type="function">
    <text evidence="1">Catalyzes the phosphorylation of the position 2 hydroxy group of 4-diphosphocytidyl-2C-methyl-D-erythritol.</text>
</comment>
<comment type="catalytic activity">
    <reaction evidence="1">
        <text>4-CDP-2-C-methyl-D-erythritol + ATP = 4-CDP-2-C-methyl-D-erythritol 2-phosphate + ADP + H(+)</text>
        <dbReference type="Rhea" id="RHEA:18437"/>
        <dbReference type="ChEBI" id="CHEBI:15378"/>
        <dbReference type="ChEBI" id="CHEBI:30616"/>
        <dbReference type="ChEBI" id="CHEBI:57823"/>
        <dbReference type="ChEBI" id="CHEBI:57919"/>
        <dbReference type="ChEBI" id="CHEBI:456216"/>
        <dbReference type="EC" id="2.7.1.148"/>
    </reaction>
</comment>
<comment type="pathway">
    <text evidence="1">Isoprenoid biosynthesis; isopentenyl diphosphate biosynthesis via DXP pathway; isopentenyl diphosphate from 1-deoxy-D-xylulose 5-phosphate: step 3/6.</text>
</comment>
<comment type="similarity">
    <text evidence="1">Belongs to the GHMP kinase family. IspE subfamily.</text>
</comment>
<evidence type="ECO:0000255" key="1">
    <source>
        <dbReference type="HAMAP-Rule" id="MF_00061"/>
    </source>
</evidence>
<dbReference type="EC" id="2.7.1.148" evidence="1"/>
<dbReference type="EMBL" id="AM260479">
    <property type="protein sequence ID" value="CAJ91524.1"/>
    <property type="molecule type" value="Genomic_DNA"/>
</dbReference>
<dbReference type="RefSeq" id="WP_011614479.1">
    <property type="nucleotide sequence ID" value="NC_008313.1"/>
</dbReference>
<dbReference type="SMR" id="Q0KEP7"/>
<dbReference type="STRING" id="381666.H16_A0374"/>
<dbReference type="KEGG" id="reh:H16_A0374"/>
<dbReference type="PATRIC" id="fig|381666.6.peg.737"/>
<dbReference type="eggNOG" id="COG1947">
    <property type="taxonomic scope" value="Bacteria"/>
</dbReference>
<dbReference type="HOGENOM" id="CLU_053057_3_0_4"/>
<dbReference type="OrthoDB" id="9809438at2"/>
<dbReference type="UniPathway" id="UPA00056">
    <property type="reaction ID" value="UER00094"/>
</dbReference>
<dbReference type="Proteomes" id="UP000008210">
    <property type="component" value="Chromosome 1"/>
</dbReference>
<dbReference type="GO" id="GO:0050515">
    <property type="term" value="F:4-(cytidine 5'-diphospho)-2-C-methyl-D-erythritol kinase activity"/>
    <property type="evidence" value="ECO:0007669"/>
    <property type="project" value="UniProtKB-UniRule"/>
</dbReference>
<dbReference type="GO" id="GO:0005524">
    <property type="term" value="F:ATP binding"/>
    <property type="evidence" value="ECO:0007669"/>
    <property type="project" value="UniProtKB-UniRule"/>
</dbReference>
<dbReference type="GO" id="GO:0019288">
    <property type="term" value="P:isopentenyl diphosphate biosynthetic process, methylerythritol 4-phosphate pathway"/>
    <property type="evidence" value="ECO:0007669"/>
    <property type="project" value="UniProtKB-UniRule"/>
</dbReference>
<dbReference type="GO" id="GO:0016114">
    <property type="term" value="P:terpenoid biosynthetic process"/>
    <property type="evidence" value="ECO:0007669"/>
    <property type="project" value="InterPro"/>
</dbReference>
<dbReference type="Gene3D" id="3.30.230.10">
    <property type="match status" value="1"/>
</dbReference>
<dbReference type="Gene3D" id="3.30.70.890">
    <property type="entry name" value="GHMP kinase, C-terminal domain"/>
    <property type="match status" value="1"/>
</dbReference>
<dbReference type="HAMAP" id="MF_00061">
    <property type="entry name" value="IspE"/>
    <property type="match status" value="1"/>
</dbReference>
<dbReference type="InterPro" id="IPR013750">
    <property type="entry name" value="GHMP_kinase_C_dom"/>
</dbReference>
<dbReference type="InterPro" id="IPR036554">
    <property type="entry name" value="GHMP_kinase_C_sf"/>
</dbReference>
<dbReference type="InterPro" id="IPR006204">
    <property type="entry name" value="GHMP_kinase_N_dom"/>
</dbReference>
<dbReference type="InterPro" id="IPR004424">
    <property type="entry name" value="IspE"/>
</dbReference>
<dbReference type="InterPro" id="IPR020568">
    <property type="entry name" value="Ribosomal_Su5_D2-typ_SF"/>
</dbReference>
<dbReference type="InterPro" id="IPR014721">
    <property type="entry name" value="Ribsml_uS5_D2-typ_fold_subgr"/>
</dbReference>
<dbReference type="NCBIfam" id="TIGR00154">
    <property type="entry name" value="ispE"/>
    <property type="match status" value="1"/>
</dbReference>
<dbReference type="NCBIfam" id="NF011202">
    <property type="entry name" value="PRK14608.1"/>
    <property type="match status" value="1"/>
</dbReference>
<dbReference type="PANTHER" id="PTHR43527">
    <property type="entry name" value="4-DIPHOSPHOCYTIDYL-2-C-METHYL-D-ERYTHRITOL KINASE, CHLOROPLASTIC"/>
    <property type="match status" value="1"/>
</dbReference>
<dbReference type="PANTHER" id="PTHR43527:SF2">
    <property type="entry name" value="4-DIPHOSPHOCYTIDYL-2-C-METHYL-D-ERYTHRITOL KINASE, CHLOROPLASTIC"/>
    <property type="match status" value="1"/>
</dbReference>
<dbReference type="Pfam" id="PF08544">
    <property type="entry name" value="GHMP_kinases_C"/>
    <property type="match status" value="1"/>
</dbReference>
<dbReference type="Pfam" id="PF00288">
    <property type="entry name" value="GHMP_kinases_N"/>
    <property type="match status" value="1"/>
</dbReference>
<dbReference type="PIRSF" id="PIRSF010376">
    <property type="entry name" value="IspE"/>
    <property type="match status" value="1"/>
</dbReference>
<dbReference type="SUPFAM" id="SSF55060">
    <property type="entry name" value="GHMP Kinase, C-terminal domain"/>
    <property type="match status" value="1"/>
</dbReference>
<dbReference type="SUPFAM" id="SSF54211">
    <property type="entry name" value="Ribosomal protein S5 domain 2-like"/>
    <property type="match status" value="1"/>
</dbReference>
<protein>
    <recommendedName>
        <fullName evidence="1">4-diphosphocytidyl-2-C-methyl-D-erythritol kinase</fullName>
        <shortName evidence="1">CMK</shortName>
        <ecNumber evidence="1">2.7.1.148</ecNumber>
    </recommendedName>
    <alternativeName>
        <fullName evidence="1">4-(cytidine-5'-diphospho)-2-C-methyl-D-erythritol kinase</fullName>
    </alternativeName>
</protein>